<evidence type="ECO:0000255" key="1"/>
<evidence type="ECO:0000256" key="2">
    <source>
        <dbReference type="SAM" id="MobiDB-lite"/>
    </source>
</evidence>
<evidence type="ECO:0000269" key="3">
    <source>
    </source>
</evidence>
<evidence type="ECO:0000303" key="4">
    <source>
    </source>
</evidence>
<evidence type="ECO:0000305" key="5"/>
<feature type="chain" id="PRO_0000252147" description="Protein FAM186B">
    <location>
        <begin position="1"/>
        <end position="893"/>
    </location>
</feature>
<feature type="region of interest" description="Disordered" evidence="2">
    <location>
        <begin position="177"/>
        <end position="207"/>
    </location>
</feature>
<feature type="region of interest" description="Disordered" evidence="2">
    <location>
        <begin position="327"/>
        <end position="376"/>
    </location>
</feature>
<feature type="region of interest" description="Disordered" evidence="2">
    <location>
        <begin position="537"/>
        <end position="557"/>
    </location>
</feature>
<feature type="region of interest" description="Disordered" evidence="2">
    <location>
        <begin position="574"/>
        <end position="611"/>
    </location>
</feature>
<feature type="region of interest" description="Disordered" evidence="2">
    <location>
        <begin position="806"/>
        <end position="827"/>
    </location>
</feature>
<feature type="coiled-coil region" evidence="1">
    <location>
        <begin position="303"/>
        <end position="331"/>
    </location>
</feature>
<feature type="compositionally biased region" description="Polar residues" evidence="2">
    <location>
        <begin position="179"/>
        <end position="188"/>
    </location>
</feature>
<feature type="compositionally biased region" description="Polar residues" evidence="2">
    <location>
        <begin position="197"/>
        <end position="207"/>
    </location>
</feature>
<feature type="compositionally biased region" description="Basic and acidic residues" evidence="2">
    <location>
        <begin position="342"/>
        <end position="353"/>
    </location>
</feature>
<feature type="splice variant" id="VSP_056992" description="In isoform 2." evidence="4">
    <location>
        <begin position="1"/>
        <end position="90"/>
    </location>
</feature>
<feature type="splice variant" id="VSP_056993" description="In isoform 2." evidence="4">
    <original>QQGKQMEAVWKTEVASSSYAIEKKTPASLPRDQLRGHPDIPRLLTLDV</original>
    <variation>LLALCLRGLVAELALVMEDFDLLHVL</variation>
    <location>
        <begin position="846"/>
        <end position="893"/>
    </location>
</feature>
<feature type="sequence variant" id="VAR_027777" description="In dbSNP:rs17853450." evidence="3">
    <original>V</original>
    <variation>M</variation>
    <location>
        <position position="397"/>
    </location>
</feature>
<feature type="sequence variant" id="VAR_027778" description="In dbSNP:rs12299908.">
    <original>E</original>
    <variation>Q</variation>
    <location>
        <position position="553"/>
    </location>
</feature>
<sequence>MEKDDPPQLVTPTSVKAIILRIEAAQLTRAQEDISTQLSDILDNVNCVINRFQEELGYDLKENAKSQQRDPKGKKRFILLEKIASFSKDAMMKEKHLYDILRWLGDWGDTLTYEIGPRKSEEEAAALDEWIEVTEKVLPLSLIATKRGIESLTALCSTLIEGQKKRSQVSKRTFWQGWQGRSPQTSPSHPQPLSPEQMLQDQHTMNTKASEVTSMLQELLDSTMFSKGEVRAIRYMATVVENLNKALILQHKENRSLETKYRHLQMQATKELSSQRLHFQQFMEVLESRRDALLKQVEILGGRYHDLLLMKQALEFQLKKAQNATGQAEDLAEVSVDSPGPSERETLPRKETVMEESQQEPMKEEQLFSPLPPSPMAMIRDSGAIAAGHQPLSTMTVRSRVADVFGSKDTESLEPVLLPLVDRRFPKKWERPVAESLGHKDKDQEDYFQKGGLQIKFHCSKQLSLESSRQVTSESQEEPWEEEFGREMRRQLWLEEEEMWQQRQKKWALLEQEHQEKLRQWNLEDLAREQQRRWVQLEKEQESPRREPEQLGEDVERRIFTPTSRWRDLEKAELSLVPAPSRTQSAHQSRRPHLPMSPSTQQPALGKQRPMSSVEFTYRPRTRRVPTKPKKSASFPVTGTSIRRLTWPSLQISPANIKKKVYHMDMEAQRKNLQLLSEESELRLPHYLRSKALELTTTTMELGALRLQYLCHKYIFYRRLQSLRQEAINHVQIMKETEASYKAQNLYIFLENIDRLQSLRLQAWTDKQKGLEEKHRECLSSMVTMFPKLQLEWNVHLNIPEVTSPKPKKCKLPAASPRHIRPSGPTYKQPFLSRHRACVPLQMARQQGKQMEAVWKTEVASSSYAIEKKTPASLPRDQLRGHPDIPRLLTLDV</sequence>
<accession>Q8IYM0</accession>
<accession>B4DZ15</accession>
<accession>Q8TCP7</accession>
<accession>Q9H0L3</accession>
<comment type="alternative products">
    <event type="alternative splicing"/>
    <isoform>
        <id>Q8IYM0-1</id>
        <name>1</name>
        <sequence type="displayed"/>
    </isoform>
    <isoform>
        <id>Q8IYM0-2</id>
        <name>2</name>
        <sequence type="described" ref="VSP_056992 VSP_056993"/>
    </isoform>
</comment>
<comment type="similarity">
    <text evidence="5">Belongs to the FAM186 family.</text>
</comment>
<keyword id="KW-0025">Alternative splicing</keyword>
<keyword id="KW-0175">Coiled coil</keyword>
<keyword id="KW-1267">Proteomics identification</keyword>
<keyword id="KW-1185">Reference proteome</keyword>
<protein>
    <recommendedName>
        <fullName>Protein FAM186B</fullName>
    </recommendedName>
</protein>
<gene>
    <name type="primary">FAM186B</name>
    <name type="synonym">C12orf25</name>
</gene>
<dbReference type="EMBL" id="AL136748">
    <property type="protein sequence ID" value="CAB66682.1"/>
    <property type="molecule type" value="mRNA"/>
</dbReference>
<dbReference type="EMBL" id="AK302702">
    <property type="protein sequence ID" value="BAG63927.1"/>
    <property type="molecule type" value="mRNA"/>
</dbReference>
<dbReference type="EMBL" id="AC020612">
    <property type="status" value="NOT_ANNOTATED_CDS"/>
    <property type="molecule type" value="Genomic_DNA"/>
</dbReference>
<dbReference type="EMBL" id="BC035621">
    <property type="protein sequence ID" value="AAH35621.1"/>
    <property type="molecule type" value="mRNA"/>
</dbReference>
<dbReference type="EMBL" id="AL713673">
    <property type="protein sequence ID" value="CAD28479.2"/>
    <property type="molecule type" value="mRNA"/>
</dbReference>
<dbReference type="CCDS" id="CCDS8788.1">
    <molecule id="Q8IYM0-1"/>
</dbReference>
<dbReference type="RefSeq" id="NP_115506.1">
    <molecule id="Q8IYM0-1"/>
    <property type="nucleotide sequence ID" value="NM_032130.3"/>
</dbReference>
<dbReference type="RefSeq" id="XP_006719688.1">
    <molecule id="Q8IYM0-1"/>
    <property type="nucleotide sequence ID" value="XM_006719625.3"/>
</dbReference>
<dbReference type="RefSeq" id="XP_011537098.1">
    <molecule id="Q8IYM0-1"/>
    <property type="nucleotide sequence ID" value="XM_011538796.3"/>
</dbReference>
<dbReference type="RefSeq" id="XP_054229371.1">
    <molecule id="Q8IYM0-1"/>
    <property type="nucleotide sequence ID" value="XM_054373396.1"/>
</dbReference>
<dbReference type="RefSeq" id="XP_054229372.1">
    <molecule id="Q8IYM0-1"/>
    <property type="nucleotide sequence ID" value="XM_054373397.1"/>
</dbReference>
<dbReference type="SMR" id="Q8IYM0"/>
<dbReference type="BioGRID" id="123865">
    <property type="interactions" value="11"/>
</dbReference>
<dbReference type="FunCoup" id="Q8IYM0">
    <property type="interactions" value="8"/>
</dbReference>
<dbReference type="IntAct" id="Q8IYM0">
    <property type="interactions" value="4"/>
</dbReference>
<dbReference type="MINT" id="Q8IYM0"/>
<dbReference type="STRING" id="9606.ENSP00000257894"/>
<dbReference type="GlyGen" id="Q8IYM0">
    <property type="glycosylation" value="1 site, 2 N-linked glycans (1 site)"/>
</dbReference>
<dbReference type="iPTMnet" id="Q8IYM0"/>
<dbReference type="PhosphoSitePlus" id="Q8IYM0"/>
<dbReference type="BioMuta" id="FAM186B"/>
<dbReference type="DMDM" id="158931119"/>
<dbReference type="jPOST" id="Q8IYM0"/>
<dbReference type="MassIVE" id="Q8IYM0"/>
<dbReference type="PaxDb" id="9606-ENSP00000257894"/>
<dbReference type="PeptideAtlas" id="Q8IYM0"/>
<dbReference type="ProteomicsDB" id="5563"/>
<dbReference type="ProteomicsDB" id="71201">
    <molecule id="Q8IYM0-1"/>
</dbReference>
<dbReference type="Antibodypedia" id="49160">
    <property type="antibodies" value="22 antibodies from 10 providers"/>
</dbReference>
<dbReference type="DNASU" id="84070"/>
<dbReference type="Ensembl" id="ENST00000257894.2">
    <molecule id="Q8IYM0-1"/>
    <property type="protein sequence ID" value="ENSP00000257894.2"/>
    <property type="gene ID" value="ENSG00000135436.8"/>
</dbReference>
<dbReference type="GeneID" id="84070"/>
<dbReference type="KEGG" id="hsa:84070"/>
<dbReference type="MANE-Select" id="ENST00000257894.2">
    <property type="protein sequence ID" value="ENSP00000257894.2"/>
    <property type="RefSeq nucleotide sequence ID" value="NM_032130.3"/>
    <property type="RefSeq protein sequence ID" value="NP_115506.1"/>
</dbReference>
<dbReference type="UCSC" id="uc001ruo.4">
    <molecule id="Q8IYM0-1"/>
    <property type="organism name" value="human"/>
</dbReference>
<dbReference type="AGR" id="HGNC:25296"/>
<dbReference type="CTD" id="84070"/>
<dbReference type="DisGeNET" id="84070"/>
<dbReference type="GeneCards" id="FAM186B"/>
<dbReference type="HGNC" id="HGNC:25296">
    <property type="gene designation" value="FAM186B"/>
</dbReference>
<dbReference type="HPA" id="ENSG00000135436">
    <property type="expression patterns" value="Tissue enriched (testis)"/>
</dbReference>
<dbReference type="neXtProt" id="NX_Q8IYM0"/>
<dbReference type="OpenTargets" id="ENSG00000135436"/>
<dbReference type="PharmGKB" id="PA164719890"/>
<dbReference type="VEuPathDB" id="HostDB:ENSG00000135436"/>
<dbReference type="eggNOG" id="ENOG502S05D">
    <property type="taxonomic scope" value="Eukaryota"/>
</dbReference>
<dbReference type="GeneTree" id="ENSGT00940000162031"/>
<dbReference type="HOGENOM" id="CLU_015516_0_0_1"/>
<dbReference type="InParanoid" id="Q8IYM0"/>
<dbReference type="OMA" id="TMTVHSR"/>
<dbReference type="OrthoDB" id="9450680at2759"/>
<dbReference type="PAN-GO" id="Q8IYM0">
    <property type="GO annotations" value="0 GO annotations based on evolutionary models"/>
</dbReference>
<dbReference type="PhylomeDB" id="Q8IYM0"/>
<dbReference type="TreeFam" id="TF338344"/>
<dbReference type="PathwayCommons" id="Q8IYM0"/>
<dbReference type="SignaLink" id="Q8IYM0"/>
<dbReference type="BioGRID-ORCS" id="84070">
    <property type="hits" value="19 hits in 1146 CRISPR screens"/>
</dbReference>
<dbReference type="GeneWiki" id="Protein_FAM186B"/>
<dbReference type="GenomeRNAi" id="84070"/>
<dbReference type="Pharos" id="Q8IYM0">
    <property type="development level" value="Tdark"/>
</dbReference>
<dbReference type="PRO" id="PR:Q8IYM0"/>
<dbReference type="Proteomes" id="UP000005640">
    <property type="component" value="Chromosome 12"/>
</dbReference>
<dbReference type="RNAct" id="Q8IYM0">
    <property type="molecule type" value="protein"/>
</dbReference>
<dbReference type="Bgee" id="ENSG00000135436">
    <property type="expression patterns" value="Expressed in left testis and 130 other cell types or tissues"/>
</dbReference>
<dbReference type="ExpressionAtlas" id="Q8IYM0">
    <property type="expression patterns" value="baseline and differential"/>
</dbReference>
<dbReference type="GO" id="GO:0032991">
    <property type="term" value="C:protein-containing complex"/>
    <property type="evidence" value="ECO:0000314"/>
    <property type="project" value="LIFEdb"/>
</dbReference>
<dbReference type="InterPro" id="IPR049146">
    <property type="entry name" value="FAM186A_B_C"/>
</dbReference>
<dbReference type="InterPro" id="IPR049144">
    <property type="entry name" value="FAM186A_B_N"/>
</dbReference>
<dbReference type="PANTHER" id="PTHR33590">
    <property type="entry name" value="GLUTENIN, HIGH MOLECULAR WEIGHT SUBUNIT PW212-RELATED PROTEIN"/>
    <property type="match status" value="1"/>
</dbReference>
<dbReference type="PANTHER" id="PTHR33590:SF3">
    <property type="entry name" value="PROTEIN FAM186B"/>
    <property type="match status" value="1"/>
</dbReference>
<dbReference type="Pfam" id="PF20865">
    <property type="entry name" value="FAM186A-B_C"/>
    <property type="match status" value="1"/>
</dbReference>
<dbReference type="Pfam" id="PF20870">
    <property type="entry name" value="FAM186A-B_N"/>
    <property type="match status" value="1"/>
</dbReference>
<proteinExistence type="evidence at protein level"/>
<name>F186B_HUMAN</name>
<organism>
    <name type="scientific">Homo sapiens</name>
    <name type="common">Human</name>
    <dbReference type="NCBI Taxonomy" id="9606"/>
    <lineage>
        <taxon>Eukaryota</taxon>
        <taxon>Metazoa</taxon>
        <taxon>Chordata</taxon>
        <taxon>Craniata</taxon>
        <taxon>Vertebrata</taxon>
        <taxon>Euteleostomi</taxon>
        <taxon>Mammalia</taxon>
        <taxon>Eutheria</taxon>
        <taxon>Euarchontoglires</taxon>
        <taxon>Primates</taxon>
        <taxon>Haplorrhini</taxon>
        <taxon>Catarrhini</taxon>
        <taxon>Hominidae</taxon>
        <taxon>Homo</taxon>
    </lineage>
</organism>
<reference key="1">
    <citation type="journal article" date="2001" name="Genome Res.">
        <title>Towards a catalog of human genes and proteins: sequencing and analysis of 500 novel complete protein coding human cDNAs.</title>
        <authorList>
            <person name="Wiemann S."/>
            <person name="Weil B."/>
            <person name="Wellenreuther R."/>
            <person name="Gassenhuber J."/>
            <person name="Glassl S."/>
            <person name="Ansorge W."/>
            <person name="Boecher M."/>
            <person name="Bloecker H."/>
            <person name="Bauersachs S."/>
            <person name="Blum H."/>
            <person name="Lauber J."/>
            <person name="Duesterhoeft A."/>
            <person name="Beyer A."/>
            <person name="Koehrer K."/>
            <person name="Strack N."/>
            <person name="Mewes H.-W."/>
            <person name="Ottenwaelder B."/>
            <person name="Obermaier B."/>
            <person name="Tampe J."/>
            <person name="Heubner D."/>
            <person name="Wambutt R."/>
            <person name="Korn B."/>
            <person name="Klein M."/>
            <person name="Poustka A."/>
        </authorList>
    </citation>
    <scope>NUCLEOTIDE SEQUENCE [LARGE SCALE MRNA] (ISOFORM 1)</scope>
    <source>
        <tissue>Testis</tissue>
    </source>
</reference>
<reference key="2">
    <citation type="journal article" date="2004" name="Nat. Genet.">
        <title>Complete sequencing and characterization of 21,243 full-length human cDNAs.</title>
        <authorList>
            <person name="Ota T."/>
            <person name="Suzuki Y."/>
            <person name="Nishikawa T."/>
            <person name="Otsuki T."/>
            <person name="Sugiyama T."/>
            <person name="Irie R."/>
            <person name="Wakamatsu A."/>
            <person name="Hayashi K."/>
            <person name="Sato H."/>
            <person name="Nagai K."/>
            <person name="Kimura K."/>
            <person name="Makita H."/>
            <person name="Sekine M."/>
            <person name="Obayashi M."/>
            <person name="Nishi T."/>
            <person name="Shibahara T."/>
            <person name="Tanaka T."/>
            <person name="Ishii S."/>
            <person name="Yamamoto J."/>
            <person name="Saito K."/>
            <person name="Kawai Y."/>
            <person name="Isono Y."/>
            <person name="Nakamura Y."/>
            <person name="Nagahari K."/>
            <person name="Murakami K."/>
            <person name="Yasuda T."/>
            <person name="Iwayanagi T."/>
            <person name="Wagatsuma M."/>
            <person name="Shiratori A."/>
            <person name="Sudo H."/>
            <person name="Hosoiri T."/>
            <person name="Kaku Y."/>
            <person name="Kodaira H."/>
            <person name="Kondo H."/>
            <person name="Sugawara M."/>
            <person name="Takahashi M."/>
            <person name="Kanda K."/>
            <person name="Yokoi T."/>
            <person name="Furuya T."/>
            <person name="Kikkawa E."/>
            <person name="Omura Y."/>
            <person name="Abe K."/>
            <person name="Kamihara K."/>
            <person name="Katsuta N."/>
            <person name="Sato K."/>
            <person name="Tanikawa M."/>
            <person name="Yamazaki M."/>
            <person name="Ninomiya K."/>
            <person name="Ishibashi T."/>
            <person name="Yamashita H."/>
            <person name="Murakawa K."/>
            <person name="Fujimori K."/>
            <person name="Tanai H."/>
            <person name="Kimata M."/>
            <person name="Watanabe M."/>
            <person name="Hiraoka S."/>
            <person name="Chiba Y."/>
            <person name="Ishida S."/>
            <person name="Ono Y."/>
            <person name="Takiguchi S."/>
            <person name="Watanabe S."/>
            <person name="Yosida M."/>
            <person name="Hotuta T."/>
            <person name="Kusano J."/>
            <person name="Kanehori K."/>
            <person name="Takahashi-Fujii A."/>
            <person name="Hara H."/>
            <person name="Tanase T.-O."/>
            <person name="Nomura Y."/>
            <person name="Togiya S."/>
            <person name="Komai F."/>
            <person name="Hara R."/>
            <person name="Takeuchi K."/>
            <person name="Arita M."/>
            <person name="Imose N."/>
            <person name="Musashino K."/>
            <person name="Yuuki H."/>
            <person name="Oshima A."/>
            <person name="Sasaki N."/>
            <person name="Aotsuka S."/>
            <person name="Yoshikawa Y."/>
            <person name="Matsunawa H."/>
            <person name="Ichihara T."/>
            <person name="Shiohata N."/>
            <person name="Sano S."/>
            <person name="Moriya S."/>
            <person name="Momiyama H."/>
            <person name="Satoh N."/>
            <person name="Takami S."/>
            <person name="Terashima Y."/>
            <person name="Suzuki O."/>
            <person name="Nakagawa S."/>
            <person name="Senoh A."/>
            <person name="Mizoguchi H."/>
            <person name="Goto Y."/>
            <person name="Shimizu F."/>
            <person name="Wakebe H."/>
            <person name="Hishigaki H."/>
            <person name="Watanabe T."/>
            <person name="Sugiyama A."/>
            <person name="Takemoto M."/>
            <person name="Kawakami B."/>
            <person name="Yamazaki M."/>
            <person name="Watanabe K."/>
            <person name="Kumagai A."/>
            <person name="Itakura S."/>
            <person name="Fukuzumi Y."/>
            <person name="Fujimori Y."/>
            <person name="Komiyama M."/>
            <person name="Tashiro H."/>
            <person name="Tanigami A."/>
            <person name="Fujiwara T."/>
            <person name="Ono T."/>
            <person name="Yamada K."/>
            <person name="Fujii Y."/>
            <person name="Ozaki K."/>
            <person name="Hirao M."/>
            <person name="Ohmori Y."/>
            <person name="Kawabata A."/>
            <person name="Hikiji T."/>
            <person name="Kobatake N."/>
            <person name="Inagaki H."/>
            <person name="Ikema Y."/>
            <person name="Okamoto S."/>
            <person name="Okitani R."/>
            <person name="Kawakami T."/>
            <person name="Noguchi S."/>
            <person name="Itoh T."/>
            <person name="Shigeta K."/>
            <person name="Senba T."/>
            <person name="Matsumura K."/>
            <person name="Nakajima Y."/>
            <person name="Mizuno T."/>
            <person name="Morinaga M."/>
            <person name="Sasaki M."/>
            <person name="Togashi T."/>
            <person name="Oyama M."/>
            <person name="Hata H."/>
            <person name="Watanabe M."/>
            <person name="Komatsu T."/>
            <person name="Mizushima-Sugano J."/>
            <person name="Satoh T."/>
            <person name="Shirai Y."/>
            <person name="Takahashi Y."/>
            <person name="Nakagawa K."/>
            <person name="Okumura K."/>
            <person name="Nagase T."/>
            <person name="Nomura N."/>
            <person name="Kikuchi H."/>
            <person name="Masuho Y."/>
            <person name="Yamashita R."/>
            <person name="Nakai K."/>
            <person name="Yada T."/>
            <person name="Nakamura Y."/>
            <person name="Ohara O."/>
            <person name="Isogai T."/>
            <person name="Sugano S."/>
        </authorList>
    </citation>
    <scope>NUCLEOTIDE SEQUENCE [LARGE SCALE MRNA] (ISOFORM 2)</scope>
    <source>
        <tissue>Testis</tissue>
    </source>
</reference>
<reference key="3">
    <citation type="journal article" date="2006" name="Nature">
        <title>The finished DNA sequence of human chromosome 12.</title>
        <authorList>
            <person name="Scherer S.E."/>
            <person name="Muzny D.M."/>
            <person name="Buhay C.J."/>
            <person name="Chen R."/>
            <person name="Cree A."/>
            <person name="Ding Y."/>
            <person name="Dugan-Rocha S."/>
            <person name="Gill R."/>
            <person name="Gunaratne P."/>
            <person name="Harris R.A."/>
            <person name="Hawes A.C."/>
            <person name="Hernandez J."/>
            <person name="Hodgson A.V."/>
            <person name="Hume J."/>
            <person name="Jackson A."/>
            <person name="Khan Z.M."/>
            <person name="Kovar-Smith C."/>
            <person name="Lewis L.R."/>
            <person name="Lozado R.J."/>
            <person name="Metzker M.L."/>
            <person name="Milosavljevic A."/>
            <person name="Miner G.R."/>
            <person name="Montgomery K.T."/>
            <person name="Morgan M.B."/>
            <person name="Nazareth L.V."/>
            <person name="Scott G."/>
            <person name="Sodergren E."/>
            <person name="Song X.-Z."/>
            <person name="Steffen D."/>
            <person name="Lovering R.C."/>
            <person name="Wheeler D.A."/>
            <person name="Worley K.C."/>
            <person name="Yuan Y."/>
            <person name="Zhang Z."/>
            <person name="Adams C.Q."/>
            <person name="Ansari-Lari M.A."/>
            <person name="Ayele M."/>
            <person name="Brown M.J."/>
            <person name="Chen G."/>
            <person name="Chen Z."/>
            <person name="Clerc-Blankenburg K.P."/>
            <person name="Davis C."/>
            <person name="Delgado O."/>
            <person name="Dinh H.H."/>
            <person name="Draper H."/>
            <person name="Gonzalez-Garay M.L."/>
            <person name="Havlak P."/>
            <person name="Jackson L.R."/>
            <person name="Jacob L.S."/>
            <person name="Kelly S.H."/>
            <person name="Li L."/>
            <person name="Li Z."/>
            <person name="Liu J."/>
            <person name="Liu W."/>
            <person name="Lu J."/>
            <person name="Maheshwari M."/>
            <person name="Nguyen B.-V."/>
            <person name="Okwuonu G.O."/>
            <person name="Pasternak S."/>
            <person name="Perez L.M."/>
            <person name="Plopper F.J.H."/>
            <person name="Santibanez J."/>
            <person name="Shen H."/>
            <person name="Tabor P.E."/>
            <person name="Verduzco D."/>
            <person name="Waldron L."/>
            <person name="Wang Q."/>
            <person name="Williams G.A."/>
            <person name="Zhang J."/>
            <person name="Zhou J."/>
            <person name="Allen C.C."/>
            <person name="Amin A.G."/>
            <person name="Anyalebechi V."/>
            <person name="Bailey M."/>
            <person name="Barbaria J.A."/>
            <person name="Bimage K.E."/>
            <person name="Bryant N.P."/>
            <person name="Burch P.E."/>
            <person name="Burkett C.E."/>
            <person name="Burrell K.L."/>
            <person name="Calderon E."/>
            <person name="Cardenas V."/>
            <person name="Carter K."/>
            <person name="Casias K."/>
            <person name="Cavazos I."/>
            <person name="Cavazos S.R."/>
            <person name="Ceasar H."/>
            <person name="Chacko J."/>
            <person name="Chan S.N."/>
            <person name="Chavez D."/>
            <person name="Christopoulos C."/>
            <person name="Chu J."/>
            <person name="Cockrell R."/>
            <person name="Cox C.D."/>
            <person name="Dang M."/>
            <person name="Dathorne S.R."/>
            <person name="David R."/>
            <person name="Davis C.M."/>
            <person name="Davy-Carroll L."/>
            <person name="Deshazo D.R."/>
            <person name="Donlin J.E."/>
            <person name="D'Souza L."/>
            <person name="Eaves K.A."/>
            <person name="Egan A."/>
            <person name="Emery-Cohen A.J."/>
            <person name="Escotto M."/>
            <person name="Flagg N."/>
            <person name="Forbes L.D."/>
            <person name="Gabisi A.M."/>
            <person name="Garza M."/>
            <person name="Hamilton C."/>
            <person name="Henderson N."/>
            <person name="Hernandez O."/>
            <person name="Hines S."/>
            <person name="Hogues M.E."/>
            <person name="Huang M."/>
            <person name="Idlebird D.G."/>
            <person name="Johnson R."/>
            <person name="Jolivet A."/>
            <person name="Jones S."/>
            <person name="Kagan R."/>
            <person name="King L.M."/>
            <person name="Leal B."/>
            <person name="Lebow H."/>
            <person name="Lee S."/>
            <person name="LeVan J.M."/>
            <person name="Lewis L.C."/>
            <person name="London P."/>
            <person name="Lorensuhewa L.M."/>
            <person name="Loulseged H."/>
            <person name="Lovett D.A."/>
            <person name="Lucier A."/>
            <person name="Lucier R.L."/>
            <person name="Ma J."/>
            <person name="Madu R.C."/>
            <person name="Mapua P."/>
            <person name="Martindale A.D."/>
            <person name="Martinez E."/>
            <person name="Massey E."/>
            <person name="Mawhiney S."/>
            <person name="Meador M.G."/>
            <person name="Mendez S."/>
            <person name="Mercado C."/>
            <person name="Mercado I.C."/>
            <person name="Merritt C.E."/>
            <person name="Miner Z.L."/>
            <person name="Minja E."/>
            <person name="Mitchell T."/>
            <person name="Mohabbat F."/>
            <person name="Mohabbat K."/>
            <person name="Montgomery B."/>
            <person name="Moore N."/>
            <person name="Morris S."/>
            <person name="Munidasa M."/>
            <person name="Ngo R.N."/>
            <person name="Nguyen N.B."/>
            <person name="Nickerson E."/>
            <person name="Nwaokelemeh O.O."/>
            <person name="Nwokenkwo S."/>
            <person name="Obregon M."/>
            <person name="Oguh M."/>
            <person name="Oragunye N."/>
            <person name="Oviedo R.J."/>
            <person name="Parish B.J."/>
            <person name="Parker D.N."/>
            <person name="Parrish J."/>
            <person name="Parks K.L."/>
            <person name="Paul H.A."/>
            <person name="Payton B.A."/>
            <person name="Perez A."/>
            <person name="Perrin W."/>
            <person name="Pickens A."/>
            <person name="Primus E.L."/>
            <person name="Pu L.-L."/>
            <person name="Puazo M."/>
            <person name="Quiles M.M."/>
            <person name="Quiroz J.B."/>
            <person name="Rabata D."/>
            <person name="Reeves K."/>
            <person name="Ruiz S.J."/>
            <person name="Shao H."/>
            <person name="Sisson I."/>
            <person name="Sonaike T."/>
            <person name="Sorelle R.P."/>
            <person name="Sutton A.E."/>
            <person name="Svatek A.F."/>
            <person name="Svetz L.A."/>
            <person name="Tamerisa K.S."/>
            <person name="Taylor T.R."/>
            <person name="Teague B."/>
            <person name="Thomas N."/>
            <person name="Thorn R.D."/>
            <person name="Trejos Z.Y."/>
            <person name="Trevino B.K."/>
            <person name="Ukegbu O.N."/>
            <person name="Urban J.B."/>
            <person name="Vasquez L.I."/>
            <person name="Vera V.A."/>
            <person name="Villasana D.M."/>
            <person name="Wang L."/>
            <person name="Ward-Moore S."/>
            <person name="Warren J.T."/>
            <person name="Wei X."/>
            <person name="White F."/>
            <person name="Williamson A.L."/>
            <person name="Wleczyk R."/>
            <person name="Wooden H.S."/>
            <person name="Wooden S.H."/>
            <person name="Yen J."/>
            <person name="Yoon L."/>
            <person name="Yoon V."/>
            <person name="Zorrilla S.E."/>
            <person name="Nelson D."/>
            <person name="Kucherlapati R."/>
            <person name="Weinstock G."/>
            <person name="Gibbs R.A."/>
        </authorList>
    </citation>
    <scope>NUCLEOTIDE SEQUENCE [LARGE SCALE GENOMIC DNA]</scope>
</reference>
<reference key="4">
    <citation type="journal article" date="2004" name="Genome Res.">
        <title>The status, quality, and expansion of the NIH full-length cDNA project: the Mammalian Gene Collection (MGC).</title>
        <authorList>
            <consortium name="The MGC Project Team"/>
        </authorList>
    </citation>
    <scope>NUCLEOTIDE SEQUENCE [LARGE SCALE MRNA] (ISOFORM 1)</scope>
    <scope>VARIANT MET-397</scope>
    <source>
        <tissue>Brain</tissue>
    </source>
</reference>
<reference key="5">
    <citation type="journal article" date="2007" name="BMC Genomics">
        <title>The full-ORF clone resource of the German cDNA consortium.</title>
        <authorList>
            <person name="Bechtel S."/>
            <person name="Rosenfelder H."/>
            <person name="Duda A."/>
            <person name="Schmidt C.P."/>
            <person name="Ernst U."/>
            <person name="Wellenreuther R."/>
            <person name="Mehrle A."/>
            <person name="Schuster C."/>
            <person name="Bahr A."/>
            <person name="Bloecker H."/>
            <person name="Heubner D."/>
            <person name="Hoerlein A."/>
            <person name="Michel G."/>
            <person name="Wedler H."/>
            <person name="Koehrer K."/>
            <person name="Ottenwaelder B."/>
            <person name="Poustka A."/>
            <person name="Wiemann S."/>
            <person name="Schupp I."/>
        </authorList>
    </citation>
    <scope>NUCLEOTIDE SEQUENCE [LARGE SCALE MRNA] OF 388-893 (ISOFORM 1)</scope>
    <source>
        <tissue>Testis</tissue>
    </source>
</reference>